<sequence length="541" mass="59755">MTRFIFITGGVVSSLGKGLASAALGALLQARGFKVRLRKLDPYLNVDPGTMSPYQHGEVYVTDDGAETDLDLGHYERFTGVPSRKSDNITTGRIYSNVIAKERRGDYLGATVQVIPHVTDAIKEFVKSDLTDEDFCLCEIGGTVGDIESLPFLEAIRQLGNELGRARTMFVHLTLVPYIPSAGELKTKPTQHSVKELLSVGIQPDMLMCRCDREIPEGDRRKIALFCNVAPDAVIPALDVDSIYQVPISYHEQGMDAVVCRHFGLDAPLPDLKRWSTIVDRIRQPEGEVTIAIVGKYISLLDSYKSLAEALHHGGIANNVKVNLNWIDSQIFEQGDVVQHLEPCDGILVPGGFGERGAFGKVEAVRFARERKVPYFGICFGMQMAVIEAARNLAGYKDASSTEFGPCDNPVVGLMTEWMKGNMLEKRAASGDLGGTMRLGAYECDLKQGSRVREIYGQGRISERHRHRYEVNMGYRADLEKTGLSFSGLSPDGVLPEIVEIPDHPWFVGVQFHPELKSKPFDPHPLFTSFIAAAVRQSRLV</sequence>
<comment type="function">
    <text evidence="1">Catalyzes the ATP-dependent amination of UTP to CTP with either L-glutamine or ammonia as the source of nitrogen. Regulates intracellular CTP levels through interactions with the four ribonucleotide triphosphates.</text>
</comment>
<comment type="catalytic activity">
    <reaction evidence="1">
        <text>UTP + L-glutamine + ATP + H2O = CTP + L-glutamate + ADP + phosphate + 2 H(+)</text>
        <dbReference type="Rhea" id="RHEA:26426"/>
        <dbReference type="ChEBI" id="CHEBI:15377"/>
        <dbReference type="ChEBI" id="CHEBI:15378"/>
        <dbReference type="ChEBI" id="CHEBI:29985"/>
        <dbReference type="ChEBI" id="CHEBI:30616"/>
        <dbReference type="ChEBI" id="CHEBI:37563"/>
        <dbReference type="ChEBI" id="CHEBI:43474"/>
        <dbReference type="ChEBI" id="CHEBI:46398"/>
        <dbReference type="ChEBI" id="CHEBI:58359"/>
        <dbReference type="ChEBI" id="CHEBI:456216"/>
        <dbReference type="EC" id="6.3.4.2"/>
    </reaction>
</comment>
<comment type="catalytic activity">
    <reaction evidence="1">
        <text>L-glutamine + H2O = L-glutamate + NH4(+)</text>
        <dbReference type="Rhea" id="RHEA:15889"/>
        <dbReference type="ChEBI" id="CHEBI:15377"/>
        <dbReference type="ChEBI" id="CHEBI:28938"/>
        <dbReference type="ChEBI" id="CHEBI:29985"/>
        <dbReference type="ChEBI" id="CHEBI:58359"/>
    </reaction>
</comment>
<comment type="catalytic activity">
    <reaction evidence="1">
        <text>UTP + NH4(+) + ATP = CTP + ADP + phosphate + 2 H(+)</text>
        <dbReference type="Rhea" id="RHEA:16597"/>
        <dbReference type="ChEBI" id="CHEBI:15378"/>
        <dbReference type="ChEBI" id="CHEBI:28938"/>
        <dbReference type="ChEBI" id="CHEBI:30616"/>
        <dbReference type="ChEBI" id="CHEBI:37563"/>
        <dbReference type="ChEBI" id="CHEBI:43474"/>
        <dbReference type="ChEBI" id="CHEBI:46398"/>
        <dbReference type="ChEBI" id="CHEBI:456216"/>
    </reaction>
</comment>
<comment type="activity regulation">
    <text evidence="1">Allosterically activated by GTP, when glutamine is the substrate; GTP has no effect on the reaction when ammonia is the substrate. The allosteric effector GTP functions by stabilizing the protein conformation that binds the tetrahedral intermediate(s) formed during glutamine hydrolysis. Inhibited by the product CTP, via allosteric rather than competitive inhibition.</text>
</comment>
<comment type="pathway">
    <text evidence="1">Pyrimidine metabolism; CTP biosynthesis via de novo pathway; CTP from UDP: step 2/2.</text>
</comment>
<comment type="subunit">
    <text evidence="1">Homotetramer.</text>
</comment>
<comment type="miscellaneous">
    <text evidence="1">CTPSs have evolved a hybrid strategy for distinguishing between UTP and CTP. The overlapping regions of the product feedback inhibitory and substrate sites recognize a common feature in both compounds, the triphosphate moiety. To differentiate isosteric substrate and product pyrimidine rings, an additional pocket far from the expected kinase/ligase catalytic site, specifically recognizes the cytosine and ribose portions of the product inhibitor.</text>
</comment>
<comment type="similarity">
    <text evidence="1">Belongs to the CTP synthase family.</text>
</comment>
<keyword id="KW-0067">ATP-binding</keyword>
<keyword id="KW-0315">Glutamine amidotransferase</keyword>
<keyword id="KW-0436">Ligase</keyword>
<keyword id="KW-0460">Magnesium</keyword>
<keyword id="KW-0479">Metal-binding</keyword>
<keyword id="KW-0547">Nucleotide-binding</keyword>
<keyword id="KW-0665">Pyrimidine biosynthesis</keyword>
<feature type="chain" id="PRO_0000266148" description="CTP synthase">
    <location>
        <begin position="1"/>
        <end position="541"/>
    </location>
</feature>
<feature type="domain" description="Glutamine amidotransferase type-1" evidence="1">
    <location>
        <begin position="290"/>
        <end position="540"/>
    </location>
</feature>
<feature type="region of interest" description="Amidoligase domain" evidence="1">
    <location>
        <begin position="1"/>
        <end position="265"/>
    </location>
</feature>
<feature type="active site" description="Nucleophile; for glutamine hydrolysis" evidence="1">
    <location>
        <position position="379"/>
    </location>
</feature>
<feature type="active site" evidence="1">
    <location>
        <position position="513"/>
    </location>
</feature>
<feature type="active site" evidence="1">
    <location>
        <position position="515"/>
    </location>
</feature>
<feature type="binding site" evidence="1">
    <location>
        <position position="13"/>
    </location>
    <ligand>
        <name>CTP</name>
        <dbReference type="ChEBI" id="CHEBI:37563"/>
        <note>allosteric inhibitor</note>
    </ligand>
</feature>
<feature type="binding site" evidence="1">
    <location>
        <position position="13"/>
    </location>
    <ligand>
        <name>UTP</name>
        <dbReference type="ChEBI" id="CHEBI:46398"/>
    </ligand>
</feature>
<feature type="binding site" evidence="1">
    <location>
        <begin position="14"/>
        <end position="19"/>
    </location>
    <ligand>
        <name>ATP</name>
        <dbReference type="ChEBI" id="CHEBI:30616"/>
    </ligand>
</feature>
<feature type="binding site" evidence="1">
    <location>
        <position position="54"/>
    </location>
    <ligand>
        <name>L-glutamine</name>
        <dbReference type="ChEBI" id="CHEBI:58359"/>
    </ligand>
</feature>
<feature type="binding site" evidence="1">
    <location>
        <position position="71"/>
    </location>
    <ligand>
        <name>ATP</name>
        <dbReference type="ChEBI" id="CHEBI:30616"/>
    </ligand>
</feature>
<feature type="binding site" evidence="1">
    <location>
        <position position="71"/>
    </location>
    <ligand>
        <name>Mg(2+)</name>
        <dbReference type="ChEBI" id="CHEBI:18420"/>
    </ligand>
</feature>
<feature type="binding site" evidence="1">
    <location>
        <position position="139"/>
    </location>
    <ligand>
        <name>Mg(2+)</name>
        <dbReference type="ChEBI" id="CHEBI:18420"/>
    </ligand>
</feature>
<feature type="binding site" evidence="1">
    <location>
        <begin position="146"/>
        <end position="148"/>
    </location>
    <ligand>
        <name>CTP</name>
        <dbReference type="ChEBI" id="CHEBI:37563"/>
        <note>allosteric inhibitor</note>
    </ligand>
</feature>
<feature type="binding site" evidence="1">
    <location>
        <begin position="186"/>
        <end position="191"/>
    </location>
    <ligand>
        <name>CTP</name>
        <dbReference type="ChEBI" id="CHEBI:37563"/>
        <note>allosteric inhibitor</note>
    </ligand>
</feature>
<feature type="binding site" evidence="1">
    <location>
        <begin position="186"/>
        <end position="191"/>
    </location>
    <ligand>
        <name>UTP</name>
        <dbReference type="ChEBI" id="CHEBI:46398"/>
    </ligand>
</feature>
<feature type="binding site" evidence="1">
    <location>
        <position position="222"/>
    </location>
    <ligand>
        <name>CTP</name>
        <dbReference type="ChEBI" id="CHEBI:37563"/>
        <note>allosteric inhibitor</note>
    </ligand>
</feature>
<feature type="binding site" evidence="1">
    <location>
        <position position="222"/>
    </location>
    <ligand>
        <name>UTP</name>
        <dbReference type="ChEBI" id="CHEBI:46398"/>
    </ligand>
</feature>
<feature type="binding site" evidence="1">
    <location>
        <position position="352"/>
    </location>
    <ligand>
        <name>L-glutamine</name>
        <dbReference type="ChEBI" id="CHEBI:58359"/>
    </ligand>
</feature>
<feature type="binding site" evidence="1">
    <location>
        <begin position="380"/>
        <end position="383"/>
    </location>
    <ligand>
        <name>L-glutamine</name>
        <dbReference type="ChEBI" id="CHEBI:58359"/>
    </ligand>
</feature>
<feature type="binding site" evidence="1">
    <location>
        <position position="403"/>
    </location>
    <ligand>
        <name>L-glutamine</name>
        <dbReference type="ChEBI" id="CHEBI:58359"/>
    </ligand>
</feature>
<feature type="binding site" evidence="1">
    <location>
        <position position="468"/>
    </location>
    <ligand>
        <name>L-glutamine</name>
        <dbReference type="ChEBI" id="CHEBI:58359"/>
    </ligand>
</feature>
<gene>
    <name evidence="1" type="primary">pyrG</name>
    <name type="ordered locus">amb1821</name>
</gene>
<organism>
    <name type="scientific">Paramagnetospirillum magneticum (strain ATCC 700264 / AMB-1)</name>
    <name type="common">Magnetospirillum magneticum</name>
    <dbReference type="NCBI Taxonomy" id="342108"/>
    <lineage>
        <taxon>Bacteria</taxon>
        <taxon>Pseudomonadati</taxon>
        <taxon>Pseudomonadota</taxon>
        <taxon>Alphaproteobacteria</taxon>
        <taxon>Rhodospirillales</taxon>
        <taxon>Magnetospirillaceae</taxon>
        <taxon>Paramagnetospirillum</taxon>
    </lineage>
</organism>
<accession>Q2W6A0</accession>
<evidence type="ECO:0000255" key="1">
    <source>
        <dbReference type="HAMAP-Rule" id="MF_01227"/>
    </source>
</evidence>
<name>PYRG_PARM1</name>
<protein>
    <recommendedName>
        <fullName evidence="1">CTP synthase</fullName>
        <ecNumber evidence="1">6.3.4.2</ecNumber>
    </recommendedName>
    <alternativeName>
        <fullName evidence="1">Cytidine 5'-triphosphate synthase</fullName>
    </alternativeName>
    <alternativeName>
        <fullName evidence="1">Cytidine triphosphate synthetase</fullName>
        <shortName evidence="1">CTP synthetase</shortName>
        <shortName evidence="1">CTPS</shortName>
    </alternativeName>
    <alternativeName>
        <fullName evidence="1">UTP--ammonia ligase</fullName>
    </alternativeName>
</protein>
<proteinExistence type="inferred from homology"/>
<reference key="1">
    <citation type="journal article" date="2005" name="DNA Res.">
        <title>Complete genome sequence of the facultative anaerobic magnetotactic bacterium Magnetospirillum sp. strain AMB-1.</title>
        <authorList>
            <person name="Matsunaga T."/>
            <person name="Okamura Y."/>
            <person name="Fukuda Y."/>
            <person name="Wahyudi A.T."/>
            <person name="Murase Y."/>
            <person name="Takeyama H."/>
        </authorList>
    </citation>
    <scope>NUCLEOTIDE SEQUENCE [LARGE SCALE GENOMIC DNA]</scope>
    <source>
        <strain>ATCC 700264 / AMB-1</strain>
    </source>
</reference>
<dbReference type="EC" id="6.3.4.2" evidence="1"/>
<dbReference type="EMBL" id="AP007255">
    <property type="protein sequence ID" value="BAE50625.1"/>
    <property type="molecule type" value="Genomic_DNA"/>
</dbReference>
<dbReference type="RefSeq" id="WP_011384226.1">
    <property type="nucleotide sequence ID" value="NC_007626.1"/>
</dbReference>
<dbReference type="SMR" id="Q2W6A0"/>
<dbReference type="STRING" id="342108.amb1821"/>
<dbReference type="MEROPS" id="C26.964"/>
<dbReference type="KEGG" id="mag:amb1821"/>
<dbReference type="HOGENOM" id="CLU_011675_5_0_5"/>
<dbReference type="OrthoDB" id="9801107at2"/>
<dbReference type="UniPathway" id="UPA00159">
    <property type="reaction ID" value="UER00277"/>
</dbReference>
<dbReference type="Proteomes" id="UP000007058">
    <property type="component" value="Chromosome"/>
</dbReference>
<dbReference type="GO" id="GO:0005829">
    <property type="term" value="C:cytosol"/>
    <property type="evidence" value="ECO:0007669"/>
    <property type="project" value="TreeGrafter"/>
</dbReference>
<dbReference type="GO" id="GO:0005524">
    <property type="term" value="F:ATP binding"/>
    <property type="evidence" value="ECO:0007669"/>
    <property type="project" value="UniProtKB-KW"/>
</dbReference>
<dbReference type="GO" id="GO:0003883">
    <property type="term" value="F:CTP synthase activity"/>
    <property type="evidence" value="ECO:0007669"/>
    <property type="project" value="UniProtKB-UniRule"/>
</dbReference>
<dbReference type="GO" id="GO:0004359">
    <property type="term" value="F:glutaminase activity"/>
    <property type="evidence" value="ECO:0007669"/>
    <property type="project" value="RHEA"/>
</dbReference>
<dbReference type="GO" id="GO:0042802">
    <property type="term" value="F:identical protein binding"/>
    <property type="evidence" value="ECO:0007669"/>
    <property type="project" value="TreeGrafter"/>
</dbReference>
<dbReference type="GO" id="GO:0046872">
    <property type="term" value="F:metal ion binding"/>
    <property type="evidence" value="ECO:0007669"/>
    <property type="project" value="UniProtKB-KW"/>
</dbReference>
<dbReference type="GO" id="GO:0044210">
    <property type="term" value="P:'de novo' CTP biosynthetic process"/>
    <property type="evidence" value="ECO:0007669"/>
    <property type="project" value="UniProtKB-UniRule"/>
</dbReference>
<dbReference type="GO" id="GO:0019856">
    <property type="term" value="P:pyrimidine nucleobase biosynthetic process"/>
    <property type="evidence" value="ECO:0007669"/>
    <property type="project" value="TreeGrafter"/>
</dbReference>
<dbReference type="CDD" id="cd03113">
    <property type="entry name" value="CTPS_N"/>
    <property type="match status" value="1"/>
</dbReference>
<dbReference type="CDD" id="cd01746">
    <property type="entry name" value="GATase1_CTP_Synthase"/>
    <property type="match status" value="1"/>
</dbReference>
<dbReference type="FunFam" id="3.40.50.300:FF:000009">
    <property type="entry name" value="CTP synthase"/>
    <property type="match status" value="1"/>
</dbReference>
<dbReference type="FunFam" id="3.40.50.880:FF:000002">
    <property type="entry name" value="CTP synthase"/>
    <property type="match status" value="1"/>
</dbReference>
<dbReference type="Gene3D" id="3.40.50.880">
    <property type="match status" value="1"/>
</dbReference>
<dbReference type="Gene3D" id="3.40.50.300">
    <property type="entry name" value="P-loop containing nucleotide triphosphate hydrolases"/>
    <property type="match status" value="1"/>
</dbReference>
<dbReference type="HAMAP" id="MF_01227">
    <property type="entry name" value="PyrG"/>
    <property type="match status" value="1"/>
</dbReference>
<dbReference type="InterPro" id="IPR029062">
    <property type="entry name" value="Class_I_gatase-like"/>
</dbReference>
<dbReference type="InterPro" id="IPR004468">
    <property type="entry name" value="CTP_synthase"/>
</dbReference>
<dbReference type="InterPro" id="IPR017456">
    <property type="entry name" value="CTP_synthase_N"/>
</dbReference>
<dbReference type="InterPro" id="IPR017926">
    <property type="entry name" value="GATASE"/>
</dbReference>
<dbReference type="InterPro" id="IPR033828">
    <property type="entry name" value="GATase1_CTP_Synthase"/>
</dbReference>
<dbReference type="InterPro" id="IPR027417">
    <property type="entry name" value="P-loop_NTPase"/>
</dbReference>
<dbReference type="NCBIfam" id="NF003792">
    <property type="entry name" value="PRK05380.1"/>
    <property type="match status" value="1"/>
</dbReference>
<dbReference type="NCBIfam" id="TIGR00337">
    <property type="entry name" value="PyrG"/>
    <property type="match status" value="1"/>
</dbReference>
<dbReference type="PANTHER" id="PTHR11550">
    <property type="entry name" value="CTP SYNTHASE"/>
    <property type="match status" value="1"/>
</dbReference>
<dbReference type="PANTHER" id="PTHR11550:SF0">
    <property type="entry name" value="CTP SYNTHASE-RELATED"/>
    <property type="match status" value="1"/>
</dbReference>
<dbReference type="Pfam" id="PF06418">
    <property type="entry name" value="CTP_synth_N"/>
    <property type="match status" value="1"/>
</dbReference>
<dbReference type="Pfam" id="PF00117">
    <property type="entry name" value="GATase"/>
    <property type="match status" value="1"/>
</dbReference>
<dbReference type="SUPFAM" id="SSF52317">
    <property type="entry name" value="Class I glutamine amidotransferase-like"/>
    <property type="match status" value="1"/>
</dbReference>
<dbReference type="SUPFAM" id="SSF52540">
    <property type="entry name" value="P-loop containing nucleoside triphosphate hydrolases"/>
    <property type="match status" value="1"/>
</dbReference>
<dbReference type="PROSITE" id="PS51273">
    <property type="entry name" value="GATASE_TYPE_1"/>
    <property type="match status" value="1"/>
</dbReference>